<gene>
    <name type="ordered locus">MTH_609</name>
</gene>
<keyword id="KW-1185">Reference proteome</keyword>
<sequence length="147" mass="16774">MITLIGEKLARKGSMFLFCGPAEKCRDCRFQPTCIAPLEEGRVYHINEVKDRYQRCPIHLGERVRVVDVEKANIEVLIDSKRAFEGSVISFEFPDCDVECSMRDLCFPEGVMEGDRCRIVKNLGKPGKQCPAGNELRRVLLRPLDKK</sequence>
<evidence type="ECO:0000305" key="1"/>
<accession>P72011</accession>
<protein>
    <recommendedName>
        <fullName>UPF0179 protein MTH_609</fullName>
    </recommendedName>
</protein>
<feature type="chain" id="PRO_0000156871" description="UPF0179 protein MTH_609">
    <location>
        <begin position="1"/>
        <end position="147"/>
    </location>
</feature>
<name>Y609_METTH</name>
<comment type="similarity">
    <text evidence="1">Belongs to the UPF0179 family.</text>
</comment>
<comment type="sequence caution" evidence="1">
    <conflict type="erroneous initiation">
        <sequence resource="EMBL-CDS" id="BAA13645"/>
    </conflict>
</comment>
<dbReference type="EMBL" id="D88555">
    <property type="protein sequence ID" value="BAA13645.1"/>
    <property type="status" value="ALT_INIT"/>
    <property type="molecule type" value="Genomic_DNA"/>
</dbReference>
<dbReference type="EMBL" id="AE000666">
    <property type="protein sequence ID" value="AAB85115.1"/>
    <property type="molecule type" value="Genomic_DNA"/>
</dbReference>
<dbReference type="PIR" id="H69180">
    <property type="entry name" value="H69180"/>
</dbReference>
<dbReference type="RefSeq" id="WP_010876248.1">
    <property type="nucleotide sequence ID" value="NC_000916.1"/>
</dbReference>
<dbReference type="FunCoup" id="P72011">
    <property type="interactions" value="1"/>
</dbReference>
<dbReference type="STRING" id="187420.MTH_609"/>
<dbReference type="PaxDb" id="187420-MTH_609"/>
<dbReference type="EnsemblBacteria" id="AAB85115">
    <property type="protein sequence ID" value="AAB85115"/>
    <property type="gene ID" value="MTH_609"/>
</dbReference>
<dbReference type="GeneID" id="1470570"/>
<dbReference type="KEGG" id="mth:MTH_609"/>
<dbReference type="PATRIC" id="fig|187420.15.peg.590"/>
<dbReference type="HOGENOM" id="CLU_121764_0_0_2"/>
<dbReference type="InParanoid" id="P72011"/>
<dbReference type="Proteomes" id="UP000005223">
    <property type="component" value="Chromosome"/>
</dbReference>
<dbReference type="HAMAP" id="MF_00498">
    <property type="entry name" value="UPF0179"/>
    <property type="match status" value="1"/>
</dbReference>
<dbReference type="InterPro" id="IPR005369">
    <property type="entry name" value="UPF0179"/>
</dbReference>
<dbReference type="PANTHER" id="PTHR40699">
    <property type="entry name" value="UPF0179 PROTEIN MJ1627"/>
    <property type="match status" value="1"/>
</dbReference>
<dbReference type="PANTHER" id="PTHR40699:SF1">
    <property type="entry name" value="UPF0179 PROTEIN MJ1627"/>
    <property type="match status" value="1"/>
</dbReference>
<dbReference type="Pfam" id="PF03684">
    <property type="entry name" value="UPF0179"/>
    <property type="match status" value="1"/>
</dbReference>
<dbReference type="PIRSF" id="PIRSF006595">
    <property type="entry name" value="UCP006595"/>
    <property type="match status" value="1"/>
</dbReference>
<organism>
    <name type="scientific">Methanothermobacter thermautotrophicus (strain ATCC 29096 / DSM 1053 / JCM 10044 / NBRC 100330 / Delta H)</name>
    <name type="common">Methanobacterium thermoautotrophicum</name>
    <dbReference type="NCBI Taxonomy" id="187420"/>
    <lineage>
        <taxon>Archaea</taxon>
        <taxon>Methanobacteriati</taxon>
        <taxon>Methanobacteriota</taxon>
        <taxon>Methanomada group</taxon>
        <taxon>Methanobacteria</taxon>
        <taxon>Methanobacteriales</taxon>
        <taxon>Methanobacteriaceae</taxon>
        <taxon>Methanothermobacter</taxon>
    </lineage>
</organism>
<proteinExistence type="inferred from homology"/>
<reference key="1">
    <citation type="journal article" date="1998" name="J. Mol. Evol.">
        <title>Did archaeal and bacterial cells arise independently from noncellular precursors? A hypothesis stating that the advent of membrane phospholipid with enantiomeric glycerophosphate backbones caused the separation of the two lines of descent.</title>
        <authorList>
            <person name="Koga Y."/>
            <person name="Kyuragi T."/>
            <person name="Nishihara M."/>
            <person name="Sone N."/>
        </authorList>
    </citation>
    <scope>NUCLEOTIDE SEQUENCE [GENOMIC DNA]</scope>
    <source>
        <strain>ATCC 29096 / DSM 1053 / JCM 10044 / NBRC 100330 / Delta H</strain>
    </source>
</reference>
<reference key="2">
    <citation type="journal article" date="1998" name="J. Mol. Evol.">
        <authorList>
            <person name="Koga Y."/>
            <person name="Kyuragi T."/>
            <person name="Nishihara M."/>
            <person name="Sone N."/>
        </authorList>
    </citation>
    <scope>ERRATUM OF PUBMED:9419225</scope>
</reference>
<reference key="3">
    <citation type="journal article" date="1997" name="J. Bacteriol.">
        <title>Complete genome sequence of Methanobacterium thermoautotrophicum deltaH: functional analysis and comparative genomics.</title>
        <authorList>
            <person name="Smith D.R."/>
            <person name="Doucette-Stamm L.A."/>
            <person name="Deloughery C."/>
            <person name="Lee H.-M."/>
            <person name="Dubois J."/>
            <person name="Aldredge T."/>
            <person name="Bashirzadeh R."/>
            <person name="Blakely D."/>
            <person name="Cook R."/>
            <person name="Gilbert K."/>
            <person name="Harrison D."/>
            <person name="Hoang L."/>
            <person name="Keagle P."/>
            <person name="Lumm W."/>
            <person name="Pothier B."/>
            <person name="Qiu D."/>
            <person name="Spadafora R."/>
            <person name="Vicare R."/>
            <person name="Wang Y."/>
            <person name="Wierzbowski J."/>
            <person name="Gibson R."/>
            <person name="Jiwani N."/>
            <person name="Caruso A."/>
            <person name="Bush D."/>
            <person name="Safer H."/>
            <person name="Patwell D."/>
            <person name="Prabhakar S."/>
            <person name="McDougall S."/>
            <person name="Shimer G."/>
            <person name="Goyal A."/>
            <person name="Pietrovski S."/>
            <person name="Church G.M."/>
            <person name="Daniels C.J."/>
            <person name="Mao J.-I."/>
            <person name="Rice P."/>
            <person name="Noelling J."/>
            <person name="Reeve J.N."/>
        </authorList>
    </citation>
    <scope>NUCLEOTIDE SEQUENCE [LARGE SCALE GENOMIC DNA]</scope>
    <source>
        <strain>ATCC 29096 / DSM 1053 / JCM 10044 / NBRC 100330 / Delta H</strain>
    </source>
</reference>